<organism>
    <name type="scientific">Drosophila melanogaster</name>
    <name type="common">Fruit fly</name>
    <dbReference type="NCBI Taxonomy" id="7227"/>
    <lineage>
        <taxon>Eukaryota</taxon>
        <taxon>Metazoa</taxon>
        <taxon>Ecdysozoa</taxon>
        <taxon>Arthropoda</taxon>
        <taxon>Hexapoda</taxon>
        <taxon>Insecta</taxon>
        <taxon>Pterygota</taxon>
        <taxon>Neoptera</taxon>
        <taxon>Endopterygota</taxon>
        <taxon>Diptera</taxon>
        <taxon>Brachycera</taxon>
        <taxon>Muscomorpha</taxon>
        <taxon>Ephydroidea</taxon>
        <taxon>Drosophilidae</taxon>
        <taxon>Drosophila</taxon>
        <taxon>Sophophora</taxon>
    </lineage>
</organism>
<reference key="1">
    <citation type="journal article" date="2000" name="Science">
        <title>The genome sequence of Drosophila melanogaster.</title>
        <authorList>
            <person name="Adams M.D."/>
            <person name="Celniker S.E."/>
            <person name="Holt R.A."/>
            <person name="Evans C.A."/>
            <person name="Gocayne J.D."/>
            <person name="Amanatides P.G."/>
            <person name="Scherer S.E."/>
            <person name="Li P.W."/>
            <person name="Hoskins R.A."/>
            <person name="Galle R.F."/>
            <person name="George R.A."/>
            <person name="Lewis S.E."/>
            <person name="Richards S."/>
            <person name="Ashburner M."/>
            <person name="Henderson S.N."/>
            <person name="Sutton G.G."/>
            <person name="Wortman J.R."/>
            <person name="Yandell M.D."/>
            <person name="Zhang Q."/>
            <person name="Chen L.X."/>
            <person name="Brandon R.C."/>
            <person name="Rogers Y.-H.C."/>
            <person name="Blazej R.G."/>
            <person name="Champe M."/>
            <person name="Pfeiffer B.D."/>
            <person name="Wan K.H."/>
            <person name="Doyle C."/>
            <person name="Baxter E.G."/>
            <person name="Helt G."/>
            <person name="Nelson C.R."/>
            <person name="Miklos G.L.G."/>
            <person name="Abril J.F."/>
            <person name="Agbayani A."/>
            <person name="An H.-J."/>
            <person name="Andrews-Pfannkoch C."/>
            <person name="Baldwin D."/>
            <person name="Ballew R.M."/>
            <person name="Basu A."/>
            <person name="Baxendale J."/>
            <person name="Bayraktaroglu L."/>
            <person name="Beasley E.M."/>
            <person name="Beeson K.Y."/>
            <person name="Benos P.V."/>
            <person name="Berman B.P."/>
            <person name="Bhandari D."/>
            <person name="Bolshakov S."/>
            <person name="Borkova D."/>
            <person name="Botchan M.R."/>
            <person name="Bouck J."/>
            <person name="Brokstein P."/>
            <person name="Brottier P."/>
            <person name="Burtis K.C."/>
            <person name="Busam D.A."/>
            <person name="Butler H."/>
            <person name="Cadieu E."/>
            <person name="Center A."/>
            <person name="Chandra I."/>
            <person name="Cherry J.M."/>
            <person name="Cawley S."/>
            <person name="Dahlke C."/>
            <person name="Davenport L.B."/>
            <person name="Davies P."/>
            <person name="de Pablos B."/>
            <person name="Delcher A."/>
            <person name="Deng Z."/>
            <person name="Mays A.D."/>
            <person name="Dew I."/>
            <person name="Dietz S.M."/>
            <person name="Dodson K."/>
            <person name="Doup L.E."/>
            <person name="Downes M."/>
            <person name="Dugan-Rocha S."/>
            <person name="Dunkov B.C."/>
            <person name="Dunn P."/>
            <person name="Durbin K.J."/>
            <person name="Evangelista C.C."/>
            <person name="Ferraz C."/>
            <person name="Ferriera S."/>
            <person name="Fleischmann W."/>
            <person name="Fosler C."/>
            <person name="Gabrielian A.E."/>
            <person name="Garg N.S."/>
            <person name="Gelbart W.M."/>
            <person name="Glasser K."/>
            <person name="Glodek A."/>
            <person name="Gong F."/>
            <person name="Gorrell J.H."/>
            <person name="Gu Z."/>
            <person name="Guan P."/>
            <person name="Harris M."/>
            <person name="Harris N.L."/>
            <person name="Harvey D.A."/>
            <person name="Heiman T.J."/>
            <person name="Hernandez J.R."/>
            <person name="Houck J."/>
            <person name="Hostin D."/>
            <person name="Houston K.A."/>
            <person name="Howland T.J."/>
            <person name="Wei M.-H."/>
            <person name="Ibegwam C."/>
            <person name="Jalali M."/>
            <person name="Kalush F."/>
            <person name="Karpen G.H."/>
            <person name="Ke Z."/>
            <person name="Kennison J.A."/>
            <person name="Ketchum K.A."/>
            <person name="Kimmel B.E."/>
            <person name="Kodira C.D."/>
            <person name="Kraft C.L."/>
            <person name="Kravitz S."/>
            <person name="Kulp D."/>
            <person name="Lai Z."/>
            <person name="Lasko P."/>
            <person name="Lei Y."/>
            <person name="Levitsky A.A."/>
            <person name="Li J.H."/>
            <person name="Li Z."/>
            <person name="Liang Y."/>
            <person name="Lin X."/>
            <person name="Liu X."/>
            <person name="Mattei B."/>
            <person name="McIntosh T.C."/>
            <person name="McLeod M.P."/>
            <person name="McPherson D."/>
            <person name="Merkulov G."/>
            <person name="Milshina N.V."/>
            <person name="Mobarry C."/>
            <person name="Morris J."/>
            <person name="Moshrefi A."/>
            <person name="Mount S.M."/>
            <person name="Moy M."/>
            <person name="Murphy B."/>
            <person name="Murphy L."/>
            <person name="Muzny D.M."/>
            <person name="Nelson D.L."/>
            <person name="Nelson D.R."/>
            <person name="Nelson K.A."/>
            <person name="Nixon K."/>
            <person name="Nusskern D.R."/>
            <person name="Pacleb J.M."/>
            <person name="Palazzolo M."/>
            <person name="Pittman G.S."/>
            <person name="Pan S."/>
            <person name="Pollard J."/>
            <person name="Puri V."/>
            <person name="Reese M.G."/>
            <person name="Reinert K."/>
            <person name="Remington K."/>
            <person name="Saunders R.D.C."/>
            <person name="Scheeler F."/>
            <person name="Shen H."/>
            <person name="Shue B.C."/>
            <person name="Siden-Kiamos I."/>
            <person name="Simpson M."/>
            <person name="Skupski M.P."/>
            <person name="Smith T.J."/>
            <person name="Spier E."/>
            <person name="Spradling A.C."/>
            <person name="Stapleton M."/>
            <person name="Strong R."/>
            <person name="Sun E."/>
            <person name="Svirskas R."/>
            <person name="Tector C."/>
            <person name="Turner R."/>
            <person name="Venter E."/>
            <person name="Wang A.H."/>
            <person name="Wang X."/>
            <person name="Wang Z.-Y."/>
            <person name="Wassarman D.A."/>
            <person name="Weinstock G.M."/>
            <person name="Weissenbach J."/>
            <person name="Williams S.M."/>
            <person name="Woodage T."/>
            <person name="Worley K.C."/>
            <person name="Wu D."/>
            <person name="Yang S."/>
            <person name="Yao Q.A."/>
            <person name="Ye J."/>
            <person name="Yeh R.-F."/>
            <person name="Zaveri J.S."/>
            <person name="Zhan M."/>
            <person name="Zhang G."/>
            <person name="Zhao Q."/>
            <person name="Zheng L."/>
            <person name="Zheng X.H."/>
            <person name="Zhong F.N."/>
            <person name="Zhong W."/>
            <person name="Zhou X."/>
            <person name="Zhu S.C."/>
            <person name="Zhu X."/>
            <person name="Smith H.O."/>
            <person name="Gibbs R.A."/>
            <person name="Myers E.W."/>
            <person name="Rubin G.M."/>
            <person name="Venter J.C."/>
        </authorList>
    </citation>
    <scope>NUCLEOTIDE SEQUENCE [LARGE SCALE GENOMIC DNA]</scope>
    <source>
        <strain>Berkeley</strain>
    </source>
</reference>
<reference key="2">
    <citation type="journal article" date="2002" name="Genome Biol.">
        <title>Annotation of the Drosophila melanogaster euchromatic genome: a systematic review.</title>
        <authorList>
            <person name="Misra S."/>
            <person name="Crosby M.A."/>
            <person name="Mungall C.J."/>
            <person name="Matthews B.B."/>
            <person name="Campbell K.S."/>
            <person name="Hradecky P."/>
            <person name="Huang Y."/>
            <person name="Kaminker J.S."/>
            <person name="Millburn G.H."/>
            <person name="Prochnik S.E."/>
            <person name="Smith C.D."/>
            <person name="Tupy J.L."/>
            <person name="Whitfield E.J."/>
            <person name="Bayraktaroglu L."/>
            <person name="Berman B.P."/>
            <person name="Bettencourt B.R."/>
            <person name="Celniker S.E."/>
            <person name="de Grey A.D.N.J."/>
            <person name="Drysdale R.A."/>
            <person name="Harris N.L."/>
            <person name="Richter J."/>
            <person name="Russo S."/>
            <person name="Schroeder A.J."/>
            <person name="Shu S.Q."/>
            <person name="Stapleton M."/>
            <person name="Yamada C."/>
            <person name="Ashburner M."/>
            <person name="Gelbart W.M."/>
            <person name="Rubin G.M."/>
            <person name="Lewis S.E."/>
        </authorList>
    </citation>
    <scope>GENOME REANNOTATION</scope>
    <source>
        <strain>Berkeley</strain>
    </source>
</reference>
<reference key="3">
    <citation type="submission" date="2004-01" db="EMBL/GenBank/DDBJ databases">
        <authorList>
            <person name="Stapleton M."/>
            <person name="Carlson J."/>
            <person name="Chavez C."/>
            <person name="Frise E."/>
            <person name="George R."/>
            <person name="Pacleb J."/>
            <person name="Park S."/>
            <person name="Wan K."/>
            <person name="Yu C."/>
            <person name="Rubin G.M."/>
            <person name="Celniker S."/>
        </authorList>
    </citation>
    <scope>NUCLEOTIDE SEQUENCE [LARGE SCALE MRNA]</scope>
    <source>
        <strain>Berkeley</strain>
        <tissue>Embryo</tissue>
    </source>
</reference>
<proteinExistence type="evidence at protein level"/>
<protein>
    <recommendedName>
        <fullName>Alpha N-terminal protein methyltransferase 1</fullName>
        <ecNumber>2.1.1.244</ecNumber>
    </recommendedName>
    <alternativeName>
        <fullName>X-Pro-Lys N-terminal protein methyltransferase 1</fullName>
        <shortName>NTM1</shortName>
    </alternativeName>
</protein>
<dbReference type="EC" id="2.1.1.244"/>
<dbReference type="EMBL" id="AE013599">
    <property type="protein sequence ID" value="AAF58883.1"/>
    <property type="molecule type" value="Genomic_DNA"/>
</dbReference>
<dbReference type="EMBL" id="BT011456">
    <property type="protein sequence ID" value="AAR99114.1"/>
    <property type="molecule type" value="mRNA"/>
</dbReference>
<dbReference type="RefSeq" id="NP_001350855.1">
    <property type="nucleotide sequence ID" value="NM_001363929.1"/>
</dbReference>
<dbReference type="RefSeq" id="NP_610528.1">
    <property type="nucleotide sequence ID" value="NM_136684.3"/>
</dbReference>
<dbReference type="SMR" id="Q6NN40"/>
<dbReference type="BioGRID" id="61850">
    <property type="interactions" value="8"/>
</dbReference>
<dbReference type="FunCoup" id="Q6NN40">
    <property type="interactions" value="1809"/>
</dbReference>
<dbReference type="IntAct" id="Q6NN40">
    <property type="interactions" value="4"/>
</dbReference>
<dbReference type="STRING" id="7227.FBpp0422664"/>
<dbReference type="PaxDb" id="7227-FBpp0087463"/>
<dbReference type="DNASU" id="36022"/>
<dbReference type="EnsemblMetazoa" id="FBtr0088375">
    <property type="protein sequence ID" value="FBpp0087463"/>
    <property type="gene ID" value="FBgn0033457"/>
</dbReference>
<dbReference type="EnsemblMetazoa" id="FBtr0472834">
    <property type="protein sequence ID" value="FBpp0422664"/>
    <property type="gene ID" value="FBgn0033457"/>
</dbReference>
<dbReference type="GeneID" id="36022"/>
<dbReference type="KEGG" id="dme:Dmel_CG1675"/>
<dbReference type="UCSC" id="CG1675-RA">
    <property type="organism name" value="d. melanogaster"/>
</dbReference>
<dbReference type="AGR" id="FB:FBgn0033457"/>
<dbReference type="CTD" id="36022"/>
<dbReference type="FlyBase" id="FBgn0033457">
    <property type="gene designation" value="Ntmt"/>
</dbReference>
<dbReference type="VEuPathDB" id="VectorBase:FBgn0033457"/>
<dbReference type="eggNOG" id="KOG3178">
    <property type="taxonomic scope" value="Eukaryota"/>
</dbReference>
<dbReference type="GeneTree" id="ENSGT00390000008371"/>
<dbReference type="HOGENOM" id="CLU_055356_3_1_1"/>
<dbReference type="InParanoid" id="Q6NN40"/>
<dbReference type="OMA" id="PVRMYCL"/>
<dbReference type="OrthoDB" id="1298661at2759"/>
<dbReference type="PhylomeDB" id="Q6NN40"/>
<dbReference type="BRENDA" id="2.1.1.244">
    <property type="organism ID" value="1994"/>
</dbReference>
<dbReference type="SignaLink" id="Q6NN40"/>
<dbReference type="BioGRID-ORCS" id="36022">
    <property type="hits" value="0 hits in 3 CRISPR screens"/>
</dbReference>
<dbReference type="GenomeRNAi" id="36022"/>
<dbReference type="PRO" id="PR:Q6NN40"/>
<dbReference type="Proteomes" id="UP000000803">
    <property type="component" value="Chromosome 2R"/>
</dbReference>
<dbReference type="Bgee" id="FBgn0033457">
    <property type="expression patterns" value="Expressed in adult abdomen and 68 other cell types or tissues"/>
</dbReference>
<dbReference type="ExpressionAtlas" id="Q6NN40">
    <property type="expression patterns" value="baseline and differential"/>
</dbReference>
<dbReference type="GO" id="GO:0005737">
    <property type="term" value="C:cytoplasm"/>
    <property type="evidence" value="ECO:0000318"/>
    <property type="project" value="GO_Central"/>
</dbReference>
<dbReference type="GO" id="GO:0005634">
    <property type="term" value="C:nucleus"/>
    <property type="evidence" value="ECO:0000314"/>
    <property type="project" value="FlyBase"/>
</dbReference>
<dbReference type="GO" id="GO:0042054">
    <property type="term" value="F:histone methyltransferase activity"/>
    <property type="evidence" value="ECO:0000314"/>
    <property type="project" value="FlyBase"/>
</dbReference>
<dbReference type="GO" id="GO:0071885">
    <property type="term" value="F:N-terminal protein N-methyltransferase activity"/>
    <property type="evidence" value="ECO:0000314"/>
    <property type="project" value="FlyBase"/>
</dbReference>
<dbReference type="GO" id="GO:0032259">
    <property type="term" value="P:methylation"/>
    <property type="evidence" value="ECO:0007669"/>
    <property type="project" value="UniProtKB-KW"/>
</dbReference>
<dbReference type="CDD" id="cd02440">
    <property type="entry name" value="AdoMet_MTases"/>
    <property type="match status" value="1"/>
</dbReference>
<dbReference type="FunFam" id="3.40.50.150:FF:000025">
    <property type="entry name" value="N-terminal Xaa-Pro-Lys N-methyltransferase 1"/>
    <property type="match status" value="1"/>
</dbReference>
<dbReference type="Gene3D" id="3.40.50.150">
    <property type="entry name" value="Vaccinia Virus protein VP39"/>
    <property type="match status" value="1"/>
</dbReference>
<dbReference type="InterPro" id="IPR008576">
    <property type="entry name" value="MeTrfase_NTM1"/>
</dbReference>
<dbReference type="InterPro" id="IPR029063">
    <property type="entry name" value="SAM-dependent_MTases_sf"/>
</dbReference>
<dbReference type="PANTHER" id="PTHR12753">
    <property type="entry name" value="AD-003 - RELATED"/>
    <property type="match status" value="1"/>
</dbReference>
<dbReference type="PANTHER" id="PTHR12753:SF0">
    <property type="entry name" value="ALPHA N-TERMINAL PROTEIN METHYLTRANSFERASE 1"/>
    <property type="match status" value="1"/>
</dbReference>
<dbReference type="Pfam" id="PF05891">
    <property type="entry name" value="Methyltransf_PK"/>
    <property type="match status" value="1"/>
</dbReference>
<dbReference type="PIRSF" id="PIRSF016958">
    <property type="entry name" value="DUF858_MeTrfase_lik"/>
    <property type="match status" value="1"/>
</dbReference>
<dbReference type="SUPFAM" id="SSF53335">
    <property type="entry name" value="S-adenosyl-L-methionine-dependent methyltransferases"/>
    <property type="match status" value="1"/>
</dbReference>
<keyword id="KW-0489">Methyltransferase</keyword>
<keyword id="KW-1185">Reference proteome</keyword>
<keyword id="KW-0949">S-adenosyl-L-methionine</keyword>
<keyword id="KW-0808">Transferase</keyword>
<feature type="chain" id="PRO_0000399784" description="Alpha N-terminal protein methyltransferase 1">
    <location>
        <begin position="1"/>
        <end position="276"/>
    </location>
</feature>
<feature type="region of interest" description="Disordered" evidence="2">
    <location>
        <begin position="1"/>
        <end position="57"/>
    </location>
</feature>
<feature type="compositionally biased region" description="Low complexity" evidence="2">
    <location>
        <begin position="34"/>
        <end position="57"/>
    </location>
</feature>
<feature type="binding site" evidence="1">
    <location>
        <position position="114"/>
    </location>
    <ligand>
        <name>S-adenosyl-L-methionine</name>
        <dbReference type="ChEBI" id="CHEBI:59789"/>
    </ligand>
</feature>
<feature type="binding site" evidence="1">
    <location>
        <position position="119"/>
    </location>
    <ligand>
        <name>S-adenosyl-L-methionine</name>
        <dbReference type="ChEBI" id="CHEBI:59789"/>
    </ligand>
</feature>
<feature type="binding site" evidence="1">
    <location>
        <begin position="136"/>
        <end position="138"/>
    </location>
    <ligand>
        <name>S-adenosyl-L-methionine</name>
        <dbReference type="ChEBI" id="CHEBI:59789"/>
    </ligand>
</feature>
<feature type="binding site" evidence="1">
    <location>
        <begin position="167"/>
        <end position="168"/>
    </location>
    <ligand>
        <name>S-adenosyl-L-methionine</name>
        <dbReference type="ChEBI" id="CHEBI:59789"/>
    </ligand>
</feature>
<feature type="binding site" evidence="1">
    <location>
        <position position="182"/>
    </location>
    <ligand>
        <name>S-adenosyl-L-methionine</name>
        <dbReference type="ChEBI" id="CHEBI:59789"/>
    </ligand>
</feature>
<evidence type="ECO:0000250" key="1"/>
<evidence type="ECO:0000256" key="2">
    <source>
        <dbReference type="SAM" id="MobiDB-lite"/>
    </source>
</evidence>
<evidence type="ECO:0000305" key="3"/>
<sequence length="276" mass="30602">MTTTLEEQLSDKLQMMDETTDKVQGSSKQKDDSSIAASSDAKTASPSSSDSSTKVAAPESEFYNKAQKYWSEVPATVNGMLGGLGYISAIDIQGSNVFLREIRVPGNRLALDCGAGIGRVTRNLLIPRFSCVDLVEQDPAFADKAREYCTSEDGSRGKVGQIYNVGLQKFTPTQQYDLVWTQWVLGHLTDRDLVSFFRRIKQGLAPGAFLCLKENVSSSKKTVEDRNDSSVTRPLDSYEHFLKEAGFRIVRKVKQQNFPKGLFPVYMIACKPVSKE</sequence>
<gene>
    <name type="primary">Ntmt</name>
    <name type="ORF">CG1675</name>
</gene>
<name>NTM1_DROME</name>
<comment type="function">
    <text evidence="1">Alpha-N-methyltransferase that methylates the N-terminus of target proteins containing the N-terminal motif [Ala/Pro/Ser]-Pro-Lys when the initiator Met is cleaved. Specifically catalyzes mono-, di- or tri-methylation of exposed alpha-amino group of Ala or Ser residue in the [Ala/Ser]-Pro-Lys motif and mono- or di-methylation of Pro in the Pro-Pro-Lys motif (By similarity).</text>
</comment>
<comment type="catalytic activity">
    <reaction>
        <text>N-terminal L-alanyl-L-prolyl-L-lysyl-[protein] + 3 S-adenosyl-L-methionine = N-terminal N,N,N-trimethyl-L-alanyl-L-prolyl-L-lysyl-[protein] + 3 S-adenosyl-L-homocysteine + 3 H(+)</text>
        <dbReference type="Rhea" id="RHEA:54712"/>
        <dbReference type="Rhea" id="RHEA-COMP:13785"/>
        <dbReference type="Rhea" id="RHEA-COMP:13971"/>
        <dbReference type="ChEBI" id="CHEBI:15378"/>
        <dbReference type="ChEBI" id="CHEBI:57856"/>
        <dbReference type="ChEBI" id="CHEBI:59789"/>
        <dbReference type="ChEBI" id="CHEBI:138057"/>
        <dbReference type="ChEBI" id="CHEBI:138315"/>
        <dbReference type="EC" id="2.1.1.244"/>
    </reaction>
</comment>
<comment type="catalytic activity">
    <reaction>
        <text>N-terminal L-seryl-L-prolyl-L-lysyl-[protein] + 3 S-adenosyl-L-methionine = N-terminal N,N,N-trimethyl-L-seryl-L-prolyl-L-lysyl-[protein] + 3 S-adenosyl-L-homocysteine + 3 H(+)</text>
        <dbReference type="Rhea" id="RHEA:54724"/>
        <dbReference type="Rhea" id="RHEA-COMP:13789"/>
        <dbReference type="Rhea" id="RHEA-COMP:13973"/>
        <dbReference type="ChEBI" id="CHEBI:15378"/>
        <dbReference type="ChEBI" id="CHEBI:57856"/>
        <dbReference type="ChEBI" id="CHEBI:59789"/>
        <dbReference type="ChEBI" id="CHEBI:138061"/>
        <dbReference type="ChEBI" id="CHEBI:138317"/>
        <dbReference type="EC" id="2.1.1.244"/>
    </reaction>
</comment>
<comment type="catalytic activity">
    <reaction>
        <text>N-terminal L-prolyl-L-prolyl-L-lysyl-[protein] + 2 S-adenosyl-L-methionine = N-terminal N,N-dimethyl-L-prolyl-L-prolyl-L-lysyl-[protein] + 2 S-adenosyl-L-homocysteine + 2 H(+)</text>
        <dbReference type="Rhea" id="RHEA:54736"/>
        <dbReference type="Rhea" id="RHEA-COMP:13787"/>
        <dbReference type="Rhea" id="RHEA-COMP:13974"/>
        <dbReference type="ChEBI" id="CHEBI:15378"/>
        <dbReference type="ChEBI" id="CHEBI:57856"/>
        <dbReference type="ChEBI" id="CHEBI:59789"/>
        <dbReference type="ChEBI" id="CHEBI:138059"/>
        <dbReference type="ChEBI" id="CHEBI:138318"/>
        <dbReference type="EC" id="2.1.1.244"/>
    </reaction>
</comment>
<comment type="interaction">
    <interactant intactId="EBI-88852">
        <id>Q6NN40</id>
    </interactant>
    <interactant intactId="EBI-191944">
        <id>Q8SX32</id>
        <label>Art8</label>
    </interactant>
    <organismsDiffer>false</organismsDiffer>
    <experiments>5</experiments>
</comment>
<comment type="similarity">
    <text evidence="3">Belongs to the methyltransferase superfamily. NTM1 family.</text>
</comment>
<accession>Q6NN40</accession>